<dbReference type="EC" id="6.3.5.2" evidence="1"/>
<dbReference type="EMBL" id="AM743169">
    <property type="protein sequence ID" value="CAQ45577.1"/>
    <property type="molecule type" value="Genomic_DNA"/>
</dbReference>
<dbReference type="RefSeq" id="WP_012479957.1">
    <property type="nucleotide sequence ID" value="NC_010943.1"/>
</dbReference>
<dbReference type="SMR" id="B2FNS1"/>
<dbReference type="MEROPS" id="C26.957"/>
<dbReference type="EnsemblBacteria" id="CAQ45577">
    <property type="protein sequence ID" value="CAQ45577"/>
    <property type="gene ID" value="Smlt2072"/>
</dbReference>
<dbReference type="KEGG" id="sml:Smlt2072"/>
<dbReference type="eggNOG" id="COG0518">
    <property type="taxonomic scope" value="Bacteria"/>
</dbReference>
<dbReference type="eggNOG" id="COG0519">
    <property type="taxonomic scope" value="Bacteria"/>
</dbReference>
<dbReference type="HOGENOM" id="CLU_014340_0_5_6"/>
<dbReference type="UniPathway" id="UPA00189">
    <property type="reaction ID" value="UER00296"/>
</dbReference>
<dbReference type="Proteomes" id="UP000008840">
    <property type="component" value="Chromosome"/>
</dbReference>
<dbReference type="GO" id="GO:0005829">
    <property type="term" value="C:cytosol"/>
    <property type="evidence" value="ECO:0007669"/>
    <property type="project" value="TreeGrafter"/>
</dbReference>
<dbReference type="GO" id="GO:0005524">
    <property type="term" value="F:ATP binding"/>
    <property type="evidence" value="ECO:0007669"/>
    <property type="project" value="UniProtKB-UniRule"/>
</dbReference>
<dbReference type="GO" id="GO:0003921">
    <property type="term" value="F:GMP synthase activity"/>
    <property type="evidence" value="ECO:0007669"/>
    <property type="project" value="InterPro"/>
</dbReference>
<dbReference type="CDD" id="cd01742">
    <property type="entry name" value="GATase1_GMP_Synthase"/>
    <property type="match status" value="1"/>
</dbReference>
<dbReference type="CDD" id="cd01997">
    <property type="entry name" value="GMP_synthase_C"/>
    <property type="match status" value="1"/>
</dbReference>
<dbReference type="FunFam" id="3.30.300.10:FF:000002">
    <property type="entry name" value="GMP synthase [glutamine-hydrolyzing]"/>
    <property type="match status" value="1"/>
</dbReference>
<dbReference type="FunFam" id="3.40.50.620:FF:000001">
    <property type="entry name" value="GMP synthase [glutamine-hydrolyzing]"/>
    <property type="match status" value="1"/>
</dbReference>
<dbReference type="FunFam" id="3.40.50.880:FF:000001">
    <property type="entry name" value="GMP synthase [glutamine-hydrolyzing]"/>
    <property type="match status" value="1"/>
</dbReference>
<dbReference type="Gene3D" id="3.30.300.10">
    <property type="match status" value="1"/>
</dbReference>
<dbReference type="Gene3D" id="3.40.50.880">
    <property type="match status" value="1"/>
</dbReference>
<dbReference type="Gene3D" id="3.40.50.620">
    <property type="entry name" value="HUPs"/>
    <property type="match status" value="1"/>
</dbReference>
<dbReference type="HAMAP" id="MF_00344">
    <property type="entry name" value="GMP_synthase"/>
    <property type="match status" value="1"/>
</dbReference>
<dbReference type="InterPro" id="IPR029062">
    <property type="entry name" value="Class_I_gatase-like"/>
</dbReference>
<dbReference type="InterPro" id="IPR017926">
    <property type="entry name" value="GATASE"/>
</dbReference>
<dbReference type="InterPro" id="IPR001674">
    <property type="entry name" value="GMP_synth_C"/>
</dbReference>
<dbReference type="InterPro" id="IPR004739">
    <property type="entry name" value="GMP_synth_GATase"/>
</dbReference>
<dbReference type="InterPro" id="IPR022955">
    <property type="entry name" value="GMP_synthase"/>
</dbReference>
<dbReference type="InterPro" id="IPR025777">
    <property type="entry name" value="GMPS_ATP_PPase_dom"/>
</dbReference>
<dbReference type="InterPro" id="IPR022310">
    <property type="entry name" value="NAD/GMP_synthase"/>
</dbReference>
<dbReference type="InterPro" id="IPR014729">
    <property type="entry name" value="Rossmann-like_a/b/a_fold"/>
</dbReference>
<dbReference type="NCBIfam" id="TIGR00884">
    <property type="entry name" value="guaA_Cterm"/>
    <property type="match status" value="1"/>
</dbReference>
<dbReference type="NCBIfam" id="TIGR00888">
    <property type="entry name" value="guaA_Nterm"/>
    <property type="match status" value="1"/>
</dbReference>
<dbReference type="NCBIfam" id="NF000848">
    <property type="entry name" value="PRK00074.1"/>
    <property type="match status" value="1"/>
</dbReference>
<dbReference type="PANTHER" id="PTHR11922:SF2">
    <property type="entry name" value="GMP SYNTHASE [GLUTAMINE-HYDROLYZING]"/>
    <property type="match status" value="1"/>
</dbReference>
<dbReference type="PANTHER" id="PTHR11922">
    <property type="entry name" value="GMP SYNTHASE-RELATED"/>
    <property type="match status" value="1"/>
</dbReference>
<dbReference type="Pfam" id="PF00117">
    <property type="entry name" value="GATase"/>
    <property type="match status" value="1"/>
</dbReference>
<dbReference type="Pfam" id="PF00958">
    <property type="entry name" value="GMP_synt_C"/>
    <property type="match status" value="1"/>
</dbReference>
<dbReference type="Pfam" id="PF02540">
    <property type="entry name" value="NAD_synthase"/>
    <property type="match status" value="1"/>
</dbReference>
<dbReference type="PRINTS" id="PR00097">
    <property type="entry name" value="ANTSNTHASEII"/>
</dbReference>
<dbReference type="PRINTS" id="PR00099">
    <property type="entry name" value="CPSGATASE"/>
</dbReference>
<dbReference type="PRINTS" id="PR00096">
    <property type="entry name" value="GATASE"/>
</dbReference>
<dbReference type="SUPFAM" id="SSF52402">
    <property type="entry name" value="Adenine nucleotide alpha hydrolases-like"/>
    <property type="match status" value="1"/>
</dbReference>
<dbReference type="SUPFAM" id="SSF52317">
    <property type="entry name" value="Class I glutamine amidotransferase-like"/>
    <property type="match status" value="1"/>
</dbReference>
<dbReference type="SUPFAM" id="SSF54810">
    <property type="entry name" value="GMP synthetase C-terminal dimerisation domain"/>
    <property type="match status" value="1"/>
</dbReference>
<dbReference type="PROSITE" id="PS51273">
    <property type="entry name" value="GATASE_TYPE_1"/>
    <property type="match status" value="1"/>
</dbReference>
<dbReference type="PROSITE" id="PS51553">
    <property type="entry name" value="GMPS_ATP_PPASE"/>
    <property type="match status" value="1"/>
</dbReference>
<feature type="chain" id="PRO_1000120427" description="GMP synthase [glutamine-hydrolyzing]">
    <location>
        <begin position="1"/>
        <end position="521"/>
    </location>
</feature>
<feature type="domain" description="Glutamine amidotransferase type-1" evidence="1">
    <location>
        <begin position="8"/>
        <end position="203"/>
    </location>
</feature>
<feature type="domain" description="GMPS ATP-PPase" evidence="1">
    <location>
        <begin position="204"/>
        <end position="396"/>
    </location>
</feature>
<feature type="active site" description="Nucleophile" evidence="1">
    <location>
        <position position="85"/>
    </location>
</feature>
<feature type="active site" evidence="1">
    <location>
        <position position="177"/>
    </location>
</feature>
<feature type="active site" evidence="1">
    <location>
        <position position="179"/>
    </location>
</feature>
<feature type="binding site" evidence="1">
    <location>
        <begin position="231"/>
        <end position="237"/>
    </location>
    <ligand>
        <name>ATP</name>
        <dbReference type="ChEBI" id="CHEBI:30616"/>
    </ligand>
</feature>
<evidence type="ECO:0000255" key="1">
    <source>
        <dbReference type="HAMAP-Rule" id="MF_00344"/>
    </source>
</evidence>
<reference key="1">
    <citation type="journal article" date="2008" name="Genome Biol.">
        <title>The complete genome, comparative and functional analysis of Stenotrophomonas maltophilia reveals an organism heavily shielded by drug resistance determinants.</title>
        <authorList>
            <person name="Crossman L.C."/>
            <person name="Gould V.C."/>
            <person name="Dow J.M."/>
            <person name="Vernikos G.S."/>
            <person name="Okazaki A."/>
            <person name="Sebaihia M."/>
            <person name="Saunders D."/>
            <person name="Arrowsmith C."/>
            <person name="Carver T."/>
            <person name="Peters N."/>
            <person name="Adlem E."/>
            <person name="Kerhornou A."/>
            <person name="Lord A."/>
            <person name="Murphy L."/>
            <person name="Seeger K."/>
            <person name="Squares R."/>
            <person name="Rutter S."/>
            <person name="Quail M.A."/>
            <person name="Rajandream M.A."/>
            <person name="Harris D."/>
            <person name="Churcher C."/>
            <person name="Bentley S.D."/>
            <person name="Parkhill J."/>
            <person name="Thomson N.R."/>
            <person name="Avison M.B."/>
        </authorList>
    </citation>
    <scope>NUCLEOTIDE SEQUENCE [LARGE SCALE GENOMIC DNA]</scope>
    <source>
        <strain>K279a</strain>
    </source>
</reference>
<proteinExistence type="inferred from homology"/>
<name>GUAA_STRMK</name>
<comment type="function">
    <text evidence="1">Catalyzes the synthesis of GMP from XMP.</text>
</comment>
<comment type="catalytic activity">
    <reaction evidence="1">
        <text>XMP + L-glutamine + ATP + H2O = GMP + L-glutamate + AMP + diphosphate + 2 H(+)</text>
        <dbReference type="Rhea" id="RHEA:11680"/>
        <dbReference type="ChEBI" id="CHEBI:15377"/>
        <dbReference type="ChEBI" id="CHEBI:15378"/>
        <dbReference type="ChEBI" id="CHEBI:29985"/>
        <dbReference type="ChEBI" id="CHEBI:30616"/>
        <dbReference type="ChEBI" id="CHEBI:33019"/>
        <dbReference type="ChEBI" id="CHEBI:57464"/>
        <dbReference type="ChEBI" id="CHEBI:58115"/>
        <dbReference type="ChEBI" id="CHEBI:58359"/>
        <dbReference type="ChEBI" id="CHEBI:456215"/>
        <dbReference type="EC" id="6.3.5.2"/>
    </reaction>
</comment>
<comment type="pathway">
    <text evidence="1">Purine metabolism; GMP biosynthesis; GMP from XMP (L-Gln route): step 1/1.</text>
</comment>
<comment type="subunit">
    <text evidence="1">Homodimer.</text>
</comment>
<organism>
    <name type="scientific">Stenotrophomonas maltophilia (strain K279a)</name>
    <dbReference type="NCBI Taxonomy" id="522373"/>
    <lineage>
        <taxon>Bacteria</taxon>
        <taxon>Pseudomonadati</taxon>
        <taxon>Pseudomonadota</taxon>
        <taxon>Gammaproteobacteria</taxon>
        <taxon>Lysobacterales</taxon>
        <taxon>Lysobacteraceae</taxon>
        <taxon>Stenotrophomonas</taxon>
        <taxon>Stenotrophomonas maltophilia group</taxon>
    </lineage>
</organism>
<sequence length="521" mass="57172">MTNIHNDKILILDFGAQYTQLIARRIRELGVYCEIWAWDHNPAEIAGFGAKGIILSGGPESTTLPGAPAAPQEVFDSGLPIFGICYGMQTLAAQLGGATEAADQREFGHAEVNVINPDALFKGLSDHGGEPKLNVWMSHGDHVSVAPPGFTITATTDRIPVAAMANEEKRWYGVQFHPEVTHTLQGQALLRRFVVDVCGCQTLWTAANIIDDQIARVREQVGDDEVILGLSGGVDSSVVAALLHKAIGEKLTCVFVDTGLLRWQEGDQVMAMFAEHMGVKVVRVNAADRYFAALEGVSDPEAKRKIIGNLFVEIFDEESNKLKNAKWLAQGTIYPDVIESAGSKTGKAHVIKSHHNVGGLPEHMKLGLVEPLRELFKDEVRRLGVELGLPRTMVYRHPFPGPGLGVRILGEVKREYAELLAKADAIFIDELRKADLYDKTSQAFAVFLPVKSVGVVGDARAYEWVIALRAVETIDFMTAHWAHLPYEFLGTVSNRIINELRGVSRVVYDISGKPPATIEWE</sequence>
<accession>B2FNS1</accession>
<protein>
    <recommendedName>
        <fullName evidence="1">GMP synthase [glutamine-hydrolyzing]</fullName>
        <ecNumber evidence="1">6.3.5.2</ecNumber>
    </recommendedName>
    <alternativeName>
        <fullName evidence="1">GMP synthetase</fullName>
    </alternativeName>
    <alternativeName>
        <fullName evidence="1">Glutamine amidotransferase</fullName>
    </alternativeName>
</protein>
<gene>
    <name evidence="1" type="primary">guaA</name>
    <name type="ordered locus">Smlt2072</name>
</gene>
<keyword id="KW-0067">ATP-binding</keyword>
<keyword id="KW-0315">Glutamine amidotransferase</keyword>
<keyword id="KW-0332">GMP biosynthesis</keyword>
<keyword id="KW-0436">Ligase</keyword>
<keyword id="KW-0547">Nucleotide-binding</keyword>
<keyword id="KW-0658">Purine biosynthesis</keyword>
<keyword id="KW-1185">Reference proteome</keyword>